<keyword id="KW-0004">4Fe-4S</keyword>
<keyword id="KW-0997">Cell inner membrane</keyword>
<keyword id="KW-1003">Cell membrane</keyword>
<keyword id="KW-0249">Electron transport</keyword>
<keyword id="KW-0408">Iron</keyword>
<keyword id="KW-0411">Iron-sulfur</keyword>
<keyword id="KW-0472">Membrane</keyword>
<keyword id="KW-0479">Metal-binding</keyword>
<keyword id="KW-1185">Reference proteome</keyword>
<keyword id="KW-0677">Repeat</keyword>
<keyword id="KW-1278">Translocase</keyword>
<keyword id="KW-0813">Transport</keyword>
<comment type="function">
    <text evidence="1">Part of a membrane-bound complex that couples electron transfer with translocation of ions across the membrane.</text>
</comment>
<comment type="cofactor">
    <cofactor evidence="1">
        <name>[4Fe-4S] cluster</name>
        <dbReference type="ChEBI" id="CHEBI:49883"/>
    </cofactor>
    <text evidence="1">Binds 3 [4Fe-4S] clusters.</text>
</comment>
<comment type="subunit">
    <text evidence="1">The complex is composed of six subunits: RnfA, RnfB, RnfC, RnfD, RnfE and RnfG.</text>
</comment>
<comment type="subcellular location">
    <subcellularLocation>
        <location evidence="1">Cell inner membrane</location>
    </subcellularLocation>
</comment>
<comment type="similarity">
    <text evidence="1">Belongs to the 4Fe4S bacterial-type ferredoxin family. RnfB subfamily.</text>
</comment>
<reference key="1">
    <citation type="submission" date="2007-08" db="EMBL/GenBank/DDBJ databases">
        <title>Complete sequence of Shewanella sediminis HAW-EB3.</title>
        <authorList>
            <consortium name="US DOE Joint Genome Institute"/>
            <person name="Copeland A."/>
            <person name="Lucas S."/>
            <person name="Lapidus A."/>
            <person name="Barry K."/>
            <person name="Glavina del Rio T."/>
            <person name="Dalin E."/>
            <person name="Tice H."/>
            <person name="Pitluck S."/>
            <person name="Chertkov O."/>
            <person name="Brettin T."/>
            <person name="Bruce D."/>
            <person name="Detter J.C."/>
            <person name="Han C."/>
            <person name="Schmutz J."/>
            <person name="Larimer F."/>
            <person name="Land M."/>
            <person name="Hauser L."/>
            <person name="Kyrpides N."/>
            <person name="Kim E."/>
            <person name="Zhao J.-S."/>
            <person name="Richardson P."/>
        </authorList>
    </citation>
    <scope>NUCLEOTIDE SEQUENCE [LARGE SCALE GENOMIC DNA]</scope>
    <source>
        <strain>HAW-EB3</strain>
    </source>
</reference>
<dbReference type="EC" id="7.-.-.-" evidence="1"/>
<dbReference type="EMBL" id="CP000821">
    <property type="protein sequence ID" value="ABV36652.1"/>
    <property type="molecule type" value="Genomic_DNA"/>
</dbReference>
<dbReference type="RefSeq" id="WP_012142387.1">
    <property type="nucleotide sequence ID" value="NC_009831.1"/>
</dbReference>
<dbReference type="STRING" id="425104.Ssed_2043"/>
<dbReference type="KEGG" id="sse:Ssed_2043"/>
<dbReference type="eggNOG" id="COG2878">
    <property type="taxonomic scope" value="Bacteria"/>
</dbReference>
<dbReference type="HOGENOM" id="CLU_063448_2_0_6"/>
<dbReference type="OrthoDB" id="9789936at2"/>
<dbReference type="Proteomes" id="UP000002015">
    <property type="component" value="Chromosome"/>
</dbReference>
<dbReference type="GO" id="GO:0005886">
    <property type="term" value="C:plasma membrane"/>
    <property type="evidence" value="ECO:0007669"/>
    <property type="project" value="UniProtKB-SubCell"/>
</dbReference>
<dbReference type="GO" id="GO:0051539">
    <property type="term" value="F:4 iron, 4 sulfur cluster binding"/>
    <property type="evidence" value="ECO:0007669"/>
    <property type="project" value="UniProtKB-UniRule"/>
</dbReference>
<dbReference type="GO" id="GO:0009055">
    <property type="term" value="F:electron transfer activity"/>
    <property type="evidence" value="ECO:0007669"/>
    <property type="project" value="InterPro"/>
</dbReference>
<dbReference type="GO" id="GO:0046872">
    <property type="term" value="F:metal ion binding"/>
    <property type="evidence" value="ECO:0007669"/>
    <property type="project" value="UniProtKB-KW"/>
</dbReference>
<dbReference type="GO" id="GO:0022900">
    <property type="term" value="P:electron transport chain"/>
    <property type="evidence" value="ECO:0007669"/>
    <property type="project" value="UniProtKB-UniRule"/>
</dbReference>
<dbReference type="FunFam" id="1.10.15.40:FF:000001">
    <property type="entry name" value="Ion-translocating oxidoreductase complex subunit B"/>
    <property type="match status" value="1"/>
</dbReference>
<dbReference type="Gene3D" id="3.30.70.20">
    <property type="match status" value="2"/>
</dbReference>
<dbReference type="Gene3D" id="1.10.15.40">
    <property type="entry name" value="Electron transport complex subunit B, putative Fe-S cluster"/>
    <property type="match status" value="1"/>
</dbReference>
<dbReference type="HAMAP" id="MF_00463">
    <property type="entry name" value="RsxB_RnfB"/>
    <property type="match status" value="1"/>
</dbReference>
<dbReference type="InterPro" id="IPR007202">
    <property type="entry name" value="4Fe-4S_dom"/>
</dbReference>
<dbReference type="InterPro" id="IPR017896">
    <property type="entry name" value="4Fe4S_Fe-S-bd"/>
</dbReference>
<dbReference type="InterPro" id="IPR017900">
    <property type="entry name" value="4Fe4S_Fe_S_CS"/>
</dbReference>
<dbReference type="InterPro" id="IPR010207">
    <property type="entry name" value="Elect_transpt_cplx_RnfB/RsxB"/>
</dbReference>
<dbReference type="InterPro" id="IPR016463">
    <property type="entry name" value="RnfB/RsxB_Proteobac"/>
</dbReference>
<dbReference type="InterPro" id="IPR050294">
    <property type="entry name" value="RnfB_subfamily"/>
</dbReference>
<dbReference type="NCBIfam" id="NF003475">
    <property type="entry name" value="PRK05113.1"/>
    <property type="match status" value="1"/>
</dbReference>
<dbReference type="NCBIfam" id="TIGR01944">
    <property type="entry name" value="rnfB"/>
    <property type="match status" value="1"/>
</dbReference>
<dbReference type="PANTHER" id="PTHR42859:SF3">
    <property type="entry name" value="ION-TRANSLOCATING OXIDOREDUCTASE COMPLEX SUBUNIT B"/>
    <property type="match status" value="1"/>
</dbReference>
<dbReference type="PANTHER" id="PTHR42859">
    <property type="entry name" value="OXIDOREDUCTASE"/>
    <property type="match status" value="1"/>
</dbReference>
<dbReference type="Pfam" id="PF14697">
    <property type="entry name" value="Fer4_21"/>
    <property type="match status" value="1"/>
</dbReference>
<dbReference type="Pfam" id="PF04060">
    <property type="entry name" value="FeS"/>
    <property type="match status" value="1"/>
</dbReference>
<dbReference type="PIRSF" id="PIRSF005784">
    <property type="entry name" value="Elect_transpt_RnfB"/>
    <property type="match status" value="1"/>
</dbReference>
<dbReference type="SUPFAM" id="SSF54862">
    <property type="entry name" value="4Fe-4S ferredoxins"/>
    <property type="match status" value="1"/>
</dbReference>
<dbReference type="PROSITE" id="PS51656">
    <property type="entry name" value="4FE4S"/>
    <property type="match status" value="1"/>
</dbReference>
<dbReference type="PROSITE" id="PS00198">
    <property type="entry name" value="4FE4S_FER_1"/>
    <property type="match status" value="2"/>
</dbReference>
<dbReference type="PROSITE" id="PS51379">
    <property type="entry name" value="4FE4S_FER_2"/>
    <property type="match status" value="2"/>
</dbReference>
<feature type="chain" id="PRO_1000081167" description="Ion-translocating oxidoreductase complex subunit B">
    <location>
        <begin position="1"/>
        <end position="189"/>
    </location>
</feature>
<feature type="domain" description="4Fe-4S" evidence="1">
    <location>
        <begin position="32"/>
        <end position="90"/>
    </location>
</feature>
<feature type="domain" description="4Fe-4S ferredoxin-type 1" evidence="1">
    <location>
        <begin position="105"/>
        <end position="134"/>
    </location>
</feature>
<feature type="domain" description="4Fe-4S ferredoxin-type 2" evidence="1">
    <location>
        <begin position="135"/>
        <end position="164"/>
    </location>
</feature>
<feature type="region of interest" description="Hydrophobic" evidence="1">
    <location>
        <begin position="1"/>
        <end position="26"/>
    </location>
</feature>
<feature type="binding site" evidence="1">
    <location>
        <position position="49"/>
    </location>
    <ligand>
        <name>[4Fe-4S] cluster</name>
        <dbReference type="ChEBI" id="CHEBI:49883"/>
        <label>1</label>
    </ligand>
</feature>
<feature type="binding site" evidence="1">
    <location>
        <position position="52"/>
    </location>
    <ligand>
        <name>[4Fe-4S] cluster</name>
        <dbReference type="ChEBI" id="CHEBI:49883"/>
        <label>1</label>
    </ligand>
</feature>
<feature type="binding site" evidence="1">
    <location>
        <position position="57"/>
    </location>
    <ligand>
        <name>[4Fe-4S] cluster</name>
        <dbReference type="ChEBI" id="CHEBI:49883"/>
        <label>1</label>
    </ligand>
</feature>
<feature type="binding site" evidence="1">
    <location>
        <position position="73"/>
    </location>
    <ligand>
        <name>[4Fe-4S] cluster</name>
        <dbReference type="ChEBI" id="CHEBI:49883"/>
        <label>1</label>
    </ligand>
</feature>
<feature type="binding site" evidence="1">
    <location>
        <position position="114"/>
    </location>
    <ligand>
        <name>[4Fe-4S] cluster</name>
        <dbReference type="ChEBI" id="CHEBI:49883"/>
        <label>2</label>
    </ligand>
</feature>
<feature type="binding site" evidence="1">
    <location>
        <position position="117"/>
    </location>
    <ligand>
        <name>[4Fe-4S] cluster</name>
        <dbReference type="ChEBI" id="CHEBI:49883"/>
        <label>2</label>
    </ligand>
</feature>
<feature type="binding site" evidence="1">
    <location>
        <position position="120"/>
    </location>
    <ligand>
        <name>[4Fe-4S] cluster</name>
        <dbReference type="ChEBI" id="CHEBI:49883"/>
        <label>2</label>
    </ligand>
</feature>
<feature type="binding site" evidence="1">
    <location>
        <position position="124"/>
    </location>
    <ligand>
        <name>[4Fe-4S] cluster</name>
        <dbReference type="ChEBI" id="CHEBI:49883"/>
        <label>3</label>
    </ligand>
</feature>
<feature type="binding site" evidence="1">
    <location>
        <position position="144"/>
    </location>
    <ligand>
        <name>[4Fe-4S] cluster</name>
        <dbReference type="ChEBI" id="CHEBI:49883"/>
        <label>3</label>
    </ligand>
</feature>
<feature type="binding site" evidence="1">
    <location>
        <position position="147"/>
    </location>
    <ligand>
        <name>[4Fe-4S] cluster</name>
        <dbReference type="ChEBI" id="CHEBI:49883"/>
        <label>3</label>
    </ligand>
</feature>
<feature type="binding site" evidence="1">
    <location>
        <position position="150"/>
    </location>
    <ligand>
        <name>[4Fe-4S] cluster</name>
        <dbReference type="ChEBI" id="CHEBI:49883"/>
        <label>3</label>
    </ligand>
</feature>
<feature type="binding site" evidence="1">
    <location>
        <position position="154"/>
    </location>
    <ligand>
        <name>[4Fe-4S] cluster</name>
        <dbReference type="ChEBI" id="CHEBI:49883"/>
        <label>2</label>
    </ligand>
</feature>
<accession>A8FUX9</accession>
<organism>
    <name type="scientific">Shewanella sediminis (strain HAW-EB3)</name>
    <dbReference type="NCBI Taxonomy" id="425104"/>
    <lineage>
        <taxon>Bacteria</taxon>
        <taxon>Pseudomonadati</taxon>
        <taxon>Pseudomonadota</taxon>
        <taxon>Gammaproteobacteria</taxon>
        <taxon>Alteromonadales</taxon>
        <taxon>Shewanellaceae</taxon>
        <taxon>Shewanella</taxon>
    </lineage>
</organism>
<protein>
    <recommendedName>
        <fullName evidence="1">Ion-translocating oxidoreductase complex subunit B</fullName>
        <ecNumber evidence="1">7.-.-.-</ecNumber>
    </recommendedName>
    <alternativeName>
        <fullName evidence="1">Rnf electron transport complex subunit B</fullName>
    </alternativeName>
</protein>
<evidence type="ECO:0000255" key="1">
    <source>
        <dbReference type="HAMAP-Rule" id="MF_00463"/>
    </source>
</evidence>
<gene>
    <name evidence="1" type="primary">rnfB</name>
    <name type="ordered locus">Ssed_2043</name>
</gene>
<name>RNFB_SHESH</name>
<proteinExistence type="inferred from homology"/>
<sequence length="189" mass="20328">MSGIFIAIILLTILALLFGILLGFAAEKFKVEGDPLVDQLEALLPQTQCGQCGYPGCRPYAEAIANGEKINLCPPGGSATMEKLAEMAGVEPEPLSATEEVQVKKVAYIREEECIGCTKCIQACPVDAILGSGKLMHTVITDYCTGCDLCVAPCPVDCIDMLPVEQTVKNWDWKLNAIPVKTLDEDCQC</sequence>